<dbReference type="EMBL" id="CU329670">
    <property type="protein sequence ID" value="CAA22602.1"/>
    <property type="molecule type" value="Genomic_DNA"/>
</dbReference>
<dbReference type="PIR" id="T37751">
    <property type="entry name" value="T37751"/>
</dbReference>
<dbReference type="RefSeq" id="NP_593126.1">
    <property type="nucleotide sequence ID" value="NM_001018522.1"/>
</dbReference>
<dbReference type="BioGRID" id="279251">
    <property type="interactions" value="2"/>
</dbReference>
<dbReference type="PaxDb" id="4896-SPAC1687.08.1"/>
<dbReference type="EnsemblFungi" id="SPAC1687.08.1">
    <property type="protein sequence ID" value="SPAC1687.08.1:pep"/>
    <property type="gene ID" value="SPAC1687.08"/>
</dbReference>
<dbReference type="KEGG" id="spo:2542803"/>
<dbReference type="PomBase" id="SPAC1687.08"/>
<dbReference type="VEuPathDB" id="FungiDB:SPAC1687.08"/>
<dbReference type="HOGENOM" id="CLU_2360956_0_0_1"/>
<dbReference type="InParanoid" id="O14067"/>
<dbReference type="PRO" id="PR:O14067"/>
<dbReference type="Proteomes" id="UP000002485">
    <property type="component" value="Chromosome I"/>
</dbReference>
<dbReference type="GO" id="GO:0005783">
    <property type="term" value="C:endoplasmic reticulum"/>
    <property type="evidence" value="ECO:0007005"/>
    <property type="project" value="PomBase"/>
</dbReference>
<dbReference type="GO" id="GO:0016020">
    <property type="term" value="C:membrane"/>
    <property type="evidence" value="ECO:0007669"/>
    <property type="project" value="UniProtKB-SubCell"/>
</dbReference>
<sequence>MFIFNVLTIRCTFHVLFAICYFCDHLLQYISNSRDSKAGLKIFLVFELAVTIFNTVMLQLANRVKNGLTLAILIVSVVMFVYHQQLIVNCKKMLAL</sequence>
<protein>
    <recommendedName>
        <fullName>Uncharacterized protein C1687.08</fullName>
    </recommendedName>
</protein>
<proteinExistence type="predicted"/>
<evidence type="ECO:0000255" key="1"/>
<evidence type="ECO:0000305" key="2"/>
<organism>
    <name type="scientific">Schizosaccharomyces pombe (strain 972 / ATCC 24843)</name>
    <name type="common">Fission yeast</name>
    <dbReference type="NCBI Taxonomy" id="284812"/>
    <lineage>
        <taxon>Eukaryota</taxon>
        <taxon>Fungi</taxon>
        <taxon>Dikarya</taxon>
        <taxon>Ascomycota</taxon>
        <taxon>Taphrinomycotina</taxon>
        <taxon>Schizosaccharomycetes</taxon>
        <taxon>Schizosaccharomycetales</taxon>
        <taxon>Schizosaccharomycetaceae</taxon>
        <taxon>Schizosaccharomyces</taxon>
    </lineage>
</organism>
<accession>O14067</accession>
<reference key="1">
    <citation type="journal article" date="2002" name="Nature">
        <title>The genome sequence of Schizosaccharomyces pombe.</title>
        <authorList>
            <person name="Wood V."/>
            <person name="Gwilliam R."/>
            <person name="Rajandream M.A."/>
            <person name="Lyne M.H."/>
            <person name="Lyne R."/>
            <person name="Stewart A."/>
            <person name="Sgouros J.G."/>
            <person name="Peat N."/>
            <person name="Hayles J."/>
            <person name="Baker S.G."/>
            <person name="Basham D."/>
            <person name="Bowman S."/>
            <person name="Brooks K."/>
            <person name="Brown D."/>
            <person name="Brown S."/>
            <person name="Chillingworth T."/>
            <person name="Churcher C.M."/>
            <person name="Collins M."/>
            <person name="Connor R."/>
            <person name="Cronin A."/>
            <person name="Davis P."/>
            <person name="Feltwell T."/>
            <person name="Fraser A."/>
            <person name="Gentles S."/>
            <person name="Goble A."/>
            <person name="Hamlin N."/>
            <person name="Harris D.E."/>
            <person name="Hidalgo J."/>
            <person name="Hodgson G."/>
            <person name="Holroyd S."/>
            <person name="Hornsby T."/>
            <person name="Howarth S."/>
            <person name="Huckle E.J."/>
            <person name="Hunt S."/>
            <person name="Jagels K."/>
            <person name="James K.D."/>
            <person name="Jones L."/>
            <person name="Jones M."/>
            <person name="Leather S."/>
            <person name="McDonald S."/>
            <person name="McLean J."/>
            <person name="Mooney P."/>
            <person name="Moule S."/>
            <person name="Mungall K.L."/>
            <person name="Murphy L.D."/>
            <person name="Niblett D."/>
            <person name="Odell C."/>
            <person name="Oliver K."/>
            <person name="O'Neil S."/>
            <person name="Pearson D."/>
            <person name="Quail M.A."/>
            <person name="Rabbinowitsch E."/>
            <person name="Rutherford K.M."/>
            <person name="Rutter S."/>
            <person name="Saunders D."/>
            <person name="Seeger K."/>
            <person name="Sharp S."/>
            <person name="Skelton J."/>
            <person name="Simmonds M.N."/>
            <person name="Squares R."/>
            <person name="Squares S."/>
            <person name="Stevens K."/>
            <person name="Taylor K."/>
            <person name="Taylor R.G."/>
            <person name="Tivey A."/>
            <person name="Walsh S.V."/>
            <person name="Warren T."/>
            <person name="Whitehead S."/>
            <person name="Woodward J.R."/>
            <person name="Volckaert G."/>
            <person name="Aert R."/>
            <person name="Robben J."/>
            <person name="Grymonprez B."/>
            <person name="Weltjens I."/>
            <person name="Vanstreels E."/>
            <person name="Rieger M."/>
            <person name="Schaefer M."/>
            <person name="Mueller-Auer S."/>
            <person name="Gabel C."/>
            <person name="Fuchs M."/>
            <person name="Duesterhoeft A."/>
            <person name="Fritzc C."/>
            <person name="Holzer E."/>
            <person name="Moestl D."/>
            <person name="Hilbert H."/>
            <person name="Borzym K."/>
            <person name="Langer I."/>
            <person name="Beck A."/>
            <person name="Lehrach H."/>
            <person name="Reinhardt R."/>
            <person name="Pohl T.M."/>
            <person name="Eger P."/>
            <person name="Zimmermann W."/>
            <person name="Wedler H."/>
            <person name="Wambutt R."/>
            <person name="Purnelle B."/>
            <person name="Goffeau A."/>
            <person name="Cadieu E."/>
            <person name="Dreano S."/>
            <person name="Gloux S."/>
            <person name="Lelaure V."/>
            <person name="Mottier S."/>
            <person name="Galibert F."/>
            <person name="Aves S.J."/>
            <person name="Xiang Z."/>
            <person name="Hunt C."/>
            <person name="Moore K."/>
            <person name="Hurst S.M."/>
            <person name="Lucas M."/>
            <person name="Rochet M."/>
            <person name="Gaillardin C."/>
            <person name="Tallada V.A."/>
            <person name="Garzon A."/>
            <person name="Thode G."/>
            <person name="Daga R.R."/>
            <person name="Cruzado L."/>
            <person name="Jimenez J."/>
            <person name="Sanchez M."/>
            <person name="del Rey F."/>
            <person name="Benito J."/>
            <person name="Dominguez A."/>
            <person name="Revuelta J.L."/>
            <person name="Moreno S."/>
            <person name="Armstrong J."/>
            <person name="Forsburg S.L."/>
            <person name="Cerutti L."/>
            <person name="Lowe T."/>
            <person name="McCombie W.R."/>
            <person name="Paulsen I."/>
            <person name="Potashkin J."/>
            <person name="Shpakovski G.V."/>
            <person name="Ussery D."/>
            <person name="Barrell B.G."/>
            <person name="Nurse P."/>
        </authorList>
    </citation>
    <scope>NUCLEOTIDE SEQUENCE [LARGE SCALE GENOMIC DNA]</scope>
    <source>
        <strain>972 / ATCC 24843</strain>
    </source>
</reference>
<keyword id="KW-0472">Membrane</keyword>
<keyword id="KW-1185">Reference proteome</keyword>
<keyword id="KW-0812">Transmembrane</keyword>
<keyword id="KW-1133">Transmembrane helix</keyword>
<gene>
    <name type="ORF">SPAC1687.08</name>
</gene>
<comment type="subcellular location">
    <subcellularLocation>
        <location evidence="2">Membrane</location>
        <topology evidence="2">Multi-pass membrane protein</topology>
    </subcellularLocation>
</comment>
<feature type="chain" id="PRO_0000116737" description="Uncharacterized protein C1687.08">
    <location>
        <begin position="1"/>
        <end position="96"/>
    </location>
</feature>
<feature type="transmembrane region" description="Helical" evidence="1">
    <location>
        <begin position="2"/>
        <end position="22"/>
    </location>
</feature>
<feature type="transmembrane region" description="Helical" evidence="1">
    <location>
        <begin position="38"/>
        <end position="58"/>
    </location>
</feature>
<feature type="transmembrane region" description="Helical" evidence="1">
    <location>
        <begin position="68"/>
        <end position="88"/>
    </location>
</feature>
<name>YFF8_SCHPO</name>